<organism>
    <name type="scientific">Nostoc sp. (strain PCC 7120 / SAG 25.82 / UTEX 2576)</name>
    <dbReference type="NCBI Taxonomy" id="103690"/>
    <lineage>
        <taxon>Bacteria</taxon>
        <taxon>Bacillati</taxon>
        <taxon>Cyanobacteriota</taxon>
        <taxon>Cyanophyceae</taxon>
        <taxon>Nostocales</taxon>
        <taxon>Nostocaceae</taxon>
        <taxon>Nostoc</taxon>
    </lineage>
</organism>
<protein>
    <recommendedName>
        <fullName evidence="1">Queuine tRNA-ribosyltransferase</fullName>
        <ecNumber evidence="1">2.4.2.29</ecNumber>
    </recommendedName>
    <alternativeName>
        <fullName evidence="1">Guanine insertion enzyme</fullName>
    </alternativeName>
    <alternativeName>
        <fullName evidence="1">tRNA-guanine transglycosylase</fullName>
    </alternativeName>
</protein>
<name>TGT_NOSS1</name>
<comment type="function">
    <text evidence="1">Catalyzes the base-exchange of a guanine (G) residue with the queuine precursor 7-aminomethyl-7-deazaguanine (PreQ1) at position 34 (anticodon wobble position) in tRNAs with GU(N) anticodons (tRNA-Asp, -Asn, -His and -Tyr). Catalysis occurs through a double-displacement mechanism. The nucleophile active site attacks the C1' of nucleotide 34 to detach the guanine base from the RNA, forming a covalent enzyme-RNA intermediate. The proton acceptor active site deprotonates the incoming PreQ1, allowing a nucleophilic attack on the C1' of the ribose to form the product. After dissociation, two additional enzymatic reactions on the tRNA convert PreQ1 to queuine (Q), resulting in the hypermodified nucleoside queuosine (7-(((4,5-cis-dihydroxy-2-cyclopenten-1-yl)amino)methyl)-7-deazaguanosine).</text>
</comment>
<comment type="catalytic activity">
    <reaction evidence="1">
        <text>7-aminomethyl-7-carbaguanine + guanosine(34) in tRNA = 7-aminomethyl-7-carbaguanosine(34) in tRNA + guanine</text>
        <dbReference type="Rhea" id="RHEA:24104"/>
        <dbReference type="Rhea" id="RHEA-COMP:10341"/>
        <dbReference type="Rhea" id="RHEA-COMP:10342"/>
        <dbReference type="ChEBI" id="CHEBI:16235"/>
        <dbReference type="ChEBI" id="CHEBI:58703"/>
        <dbReference type="ChEBI" id="CHEBI:74269"/>
        <dbReference type="ChEBI" id="CHEBI:82833"/>
        <dbReference type="EC" id="2.4.2.29"/>
    </reaction>
</comment>
<comment type="cofactor">
    <cofactor evidence="1">
        <name>Zn(2+)</name>
        <dbReference type="ChEBI" id="CHEBI:29105"/>
    </cofactor>
    <text evidence="1">Binds 1 zinc ion per subunit.</text>
</comment>
<comment type="pathway">
    <text evidence="1">tRNA modification; tRNA-queuosine biosynthesis.</text>
</comment>
<comment type="subunit">
    <text evidence="1">Homodimer. Within each dimer, one monomer is responsible for RNA recognition and catalysis, while the other monomer binds to the replacement base PreQ1.</text>
</comment>
<comment type="similarity">
    <text evidence="1">Belongs to the queuine tRNA-ribosyltransferase family.</text>
</comment>
<comment type="sequence caution" evidence="2">
    <conflict type="erroneous initiation">
        <sequence resource="EMBL-CDS" id="BAB73584"/>
    </conflict>
</comment>
<proteinExistence type="inferred from homology"/>
<feature type="chain" id="PRO_0000135441" description="Queuine tRNA-ribosyltransferase">
    <location>
        <begin position="1"/>
        <end position="374"/>
    </location>
</feature>
<feature type="region of interest" description="RNA binding" evidence="1">
    <location>
        <begin position="249"/>
        <end position="255"/>
    </location>
</feature>
<feature type="region of interest" description="RNA binding; important for wobble base 34 recognition" evidence="1">
    <location>
        <begin position="273"/>
        <end position="277"/>
    </location>
</feature>
<feature type="active site" description="Proton acceptor" evidence="1">
    <location>
        <position position="95"/>
    </location>
</feature>
<feature type="active site" description="Nucleophile" evidence="1">
    <location>
        <position position="268"/>
    </location>
</feature>
<feature type="binding site" evidence="1">
    <location>
        <begin position="95"/>
        <end position="99"/>
    </location>
    <ligand>
        <name>substrate</name>
    </ligand>
</feature>
<feature type="binding site" evidence="1">
    <location>
        <position position="149"/>
    </location>
    <ligand>
        <name>substrate</name>
    </ligand>
</feature>
<feature type="binding site" evidence="1">
    <location>
        <position position="191"/>
    </location>
    <ligand>
        <name>substrate</name>
    </ligand>
</feature>
<feature type="binding site" evidence="1">
    <location>
        <position position="218"/>
    </location>
    <ligand>
        <name>substrate</name>
    </ligand>
</feature>
<feature type="binding site" evidence="1">
    <location>
        <position position="306"/>
    </location>
    <ligand>
        <name>Zn(2+)</name>
        <dbReference type="ChEBI" id="CHEBI:29105"/>
    </ligand>
</feature>
<feature type="binding site" evidence="1">
    <location>
        <position position="308"/>
    </location>
    <ligand>
        <name>Zn(2+)</name>
        <dbReference type="ChEBI" id="CHEBI:29105"/>
    </ligand>
</feature>
<feature type="binding site" evidence="1">
    <location>
        <position position="311"/>
    </location>
    <ligand>
        <name>Zn(2+)</name>
        <dbReference type="ChEBI" id="CHEBI:29105"/>
    </ligand>
</feature>
<feature type="binding site" evidence="1">
    <location>
        <position position="337"/>
    </location>
    <ligand>
        <name>Zn(2+)</name>
        <dbReference type="ChEBI" id="CHEBI:29105"/>
    </ligand>
</feature>
<sequence length="374" mass="41678">MSAIFSFQSLARCSQTKARSGIFLTPHGIVETPRFMPVGTLANVKTVTPAQLKETGAQMVLSNTYHLHLQPGEAIVAGGGGLHKFMGWNGPMLTDSGGFQVFSLSEMRKITEEGVTFRSPRDGQIIKLTPERSIEIQNILGADVIMAFDECPPYPANRQEVEAATERTYRWLERCITAHQRQDQALFGIVQGGVYLDLRAKAANTLTELDLPGYAIGGVSVGEPPEMMAQIVQATAPLLPAHKPRYLMGVGTYREMVIAIASGIDLFDCVIPTRWARHGTAMVKGERWNLKNAKFREDFAPIDETCPCYACQNFSRAYISHLVRSQEILAYTLLSIHNITELIRFTQKIREAILSDRFLEEFGHWLNSAETDNR</sequence>
<keyword id="KW-0328">Glycosyltransferase</keyword>
<keyword id="KW-0479">Metal-binding</keyword>
<keyword id="KW-0671">Queuosine biosynthesis</keyword>
<keyword id="KW-1185">Reference proteome</keyword>
<keyword id="KW-0808">Transferase</keyword>
<keyword id="KW-0819">tRNA processing</keyword>
<keyword id="KW-0862">Zinc</keyword>
<accession>Q8YVT9</accession>
<gene>
    <name evidence="1" type="primary">tgt</name>
    <name type="ordered locus">alr1885</name>
</gene>
<reference key="1">
    <citation type="journal article" date="2001" name="DNA Res.">
        <title>Complete genomic sequence of the filamentous nitrogen-fixing cyanobacterium Anabaena sp. strain PCC 7120.</title>
        <authorList>
            <person name="Kaneko T."/>
            <person name="Nakamura Y."/>
            <person name="Wolk C.P."/>
            <person name="Kuritz T."/>
            <person name="Sasamoto S."/>
            <person name="Watanabe A."/>
            <person name="Iriguchi M."/>
            <person name="Ishikawa A."/>
            <person name="Kawashima K."/>
            <person name="Kimura T."/>
            <person name="Kishida Y."/>
            <person name="Kohara M."/>
            <person name="Matsumoto M."/>
            <person name="Matsuno A."/>
            <person name="Muraki A."/>
            <person name="Nakazaki N."/>
            <person name="Shimpo S."/>
            <person name="Sugimoto M."/>
            <person name="Takazawa M."/>
            <person name="Yamada M."/>
            <person name="Yasuda M."/>
            <person name="Tabata S."/>
        </authorList>
    </citation>
    <scope>NUCLEOTIDE SEQUENCE [LARGE SCALE GENOMIC DNA]</scope>
    <source>
        <strain>PCC 7120 / SAG 25.82 / UTEX 2576</strain>
    </source>
</reference>
<dbReference type="EC" id="2.4.2.29" evidence="1"/>
<dbReference type="EMBL" id="BA000019">
    <property type="protein sequence ID" value="BAB73584.1"/>
    <property type="status" value="ALT_INIT"/>
    <property type="molecule type" value="Genomic_DNA"/>
</dbReference>
<dbReference type="PIR" id="AG2041">
    <property type="entry name" value="AG2041"/>
</dbReference>
<dbReference type="RefSeq" id="WP_044521114.1">
    <property type="nucleotide sequence ID" value="NZ_RSCN01000017.1"/>
</dbReference>
<dbReference type="SMR" id="Q8YVT9"/>
<dbReference type="STRING" id="103690.gene:10493904"/>
<dbReference type="KEGG" id="ana:alr1885"/>
<dbReference type="eggNOG" id="COG0343">
    <property type="taxonomic scope" value="Bacteria"/>
</dbReference>
<dbReference type="OrthoDB" id="9805417at2"/>
<dbReference type="UniPathway" id="UPA00392"/>
<dbReference type="Proteomes" id="UP000002483">
    <property type="component" value="Chromosome"/>
</dbReference>
<dbReference type="GO" id="GO:0005829">
    <property type="term" value="C:cytosol"/>
    <property type="evidence" value="ECO:0007669"/>
    <property type="project" value="TreeGrafter"/>
</dbReference>
<dbReference type="GO" id="GO:0046872">
    <property type="term" value="F:metal ion binding"/>
    <property type="evidence" value="ECO:0007669"/>
    <property type="project" value="UniProtKB-KW"/>
</dbReference>
<dbReference type="GO" id="GO:0008479">
    <property type="term" value="F:tRNA-guanosine(34) queuine transglycosylase activity"/>
    <property type="evidence" value="ECO:0007669"/>
    <property type="project" value="UniProtKB-UniRule"/>
</dbReference>
<dbReference type="GO" id="GO:0008616">
    <property type="term" value="P:queuosine biosynthetic process"/>
    <property type="evidence" value="ECO:0007669"/>
    <property type="project" value="UniProtKB-UniRule"/>
</dbReference>
<dbReference type="GO" id="GO:0002099">
    <property type="term" value="P:tRNA wobble guanine modification"/>
    <property type="evidence" value="ECO:0007669"/>
    <property type="project" value="TreeGrafter"/>
</dbReference>
<dbReference type="GO" id="GO:0101030">
    <property type="term" value="P:tRNA-guanine transglycosylation"/>
    <property type="evidence" value="ECO:0007669"/>
    <property type="project" value="InterPro"/>
</dbReference>
<dbReference type="FunFam" id="3.20.20.105:FF:000001">
    <property type="entry name" value="Queuine tRNA-ribosyltransferase"/>
    <property type="match status" value="1"/>
</dbReference>
<dbReference type="Gene3D" id="3.20.20.105">
    <property type="entry name" value="Queuine tRNA-ribosyltransferase-like"/>
    <property type="match status" value="1"/>
</dbReference>
<dbReference type="HAMAP" id="MF_00168">
    <property type="entry name" value="Q_tRNA_Tgt"/>
    <property type="match status" value="1"/>
</dbReference>
<dbReference type="InterPro" id="IPR050076">
    <property type="entry name" value="ArchSynthase1/Queuine_TRR"/>
</dbReference>
<dbReference type="InterPro" id="IPR004803">
    <property type="entry name" value="TGT"/>
</dbReference>
<dbReference type="InterPro" id="IPR036511">
    <property type="entry name" value="TGT-like_sf"/>
</dbReference>
<dbReference type="InterPro" id="IPR002616">
    <property type="entry name" value="tRNA_ribo_trans-like"/>
</dbReference>
<dbReference type="NCBIfam" id="TIGR00430">
    <property type="entry name" value="Q_tRNA_tgt"/>
    <property type="match status" value="1"/>
</dbReference>
<dbReference type="NCBIfam" id="TIGR00449">
    <property type="entry name" value="tgt_general"/>
    <property type="match status" value="1"/>
</dbReference>
<dbReference type="PANTHER" id="PTHR46499">
    <property type="entry name" value="QUEUINE TRNA-RIBOSYLTRANSFERASE"/>
    <property type="match status" value="1"/>
</dbReference>
<dbReference type="PANTHER" id="PTHR46499:SF1">
    <property type="entry name" value="QUEUINE TRNA-RIBOSYLTRANSFERASE"/>
    <property type="match status" value="1"/>
</dbReference>
<dbReference type="Pfam" id="PF01702">
    <property type="entry name" value="TGT"/>
    <property type="match status" value="1"/>
</dbReference>
<dbReference type="SUPFAM" id="SSF51713">
    <property type="entry name" value="tRNA-guanine transglycosylase"/>
    <property type="match status" value="1"/>
</dbReference>
<evidence type="ECO:0000255" key="1">
    <source>
        <dbReference type="HAMAP-Rule" id="MF_00168"/>
    </source>
</evidence>
<evidence type="ECO:0000305" key="2"/>